<feature type="chain" id="PRO_0000423948" description="tRNA-specific adenosine deaminase">
    <location>
        <begin position="1"/>
        <end position="152"/>
    </location>
</feature>
<feature type="domain" description="CMP/dCMP-type deaminase" evidence="2">
    <location>
        <begin position="2"/>
        <end position="111"/>
    </location>
</feature>
<feature type="active site" description="Proton donor" evidence="1 3">
    <location>
        <position position="55"/>
    </location>
</feature>
<feature type="binding site" evidence="1 3">
    <location>
        <position position="53"/>
    </location>
    <ligand>
        <name>Zn(2+)</name>
        <dbReference type="ChEBI" id="CHEBI:29105"/>
        <note>catalytic</note>
    </ligand>
</feature>
<feature type="binding site" evidence="1 3">
    <location>
        <position position="83"/>
    </location>
    <ligand>
        <name>Zn(2+)</name>
        <dbReference type="ChEBI" id="CHEBI:29105"/>
        <note>catalytic</note>
    </ligand>
</feature>
<feature type="binding site" evidence="1 3">
    <location>
        <position position="86"/>
    </location>
    <ligand>
        <name>Zn(2+)</name>
        <dbReference type="ChEBI" id="CHEBI:29105"/>
        <note>catalytic</note>
    </ligand>
</feature>
<feature type="mutagenesis site" description="Lack of activity." evidence="3">
    <original>E</original>
    <variation>A</variation>
    <location>
        <position position="55"/>
    </location>
</feature>
<feature type="mutagenesis site" description="220-fold decrease in activity." evidence="3">
    <original>R</original>
    <variation>A</variation>
    <location>
        <position position="94"/>
    </location>
</feature>
<feature type="mutagenesis site" description="800-fold decrease in activity." evidence="3">
    <original>F</original>
    <variation>A</variation>
    <location>
        <position position="144"/>
    </location>
</feature>
<feature type="mutagenesis site" description="Lack of activity." evidence="3">
    <original>F</original>
    <variation>A</variation>
    <location>
        <position position="145"/>
    </location>
</feature>
<feature type="mutagenesis site" description="800-fold decrease in activity." evidence="3">
    <original>R</original>
    <variation>A</variation>
    <location>
        <position position="149"/>
    </location>
</feature>
<feature type="helix" evidence="4">
    <location>
        <begin position="4"/>
        <end position="20"/>
    </location>
</feature>
<feature type="strand" evidence="4">
    <location>
        <begin position="27"/>
        <end position="32"/>
    </location>
</feature>
<feature type="strand" evidence="4">
    <location>
        <begin position="35"/>
        <end position="41"/>
    </location>
</feature>
<feature type="helix" evidence="4">
    <location>
        <begin position="44"/>
        <end position="47"/>
    </location>
</feature>
<feature type="helix" evidence="4">
    <location>
        <begin position="54"/>
        <end position="66"/>
    </location>
</feature>
<feature type="strand" evidence="4">
    <location>
        <begin position="75"/>
        <end position="80"/>
    </location>
</feature>
<feature type="helix" evidence="4">
    <location>
        <begin position="84"/>
        <end position="92"/>
    </location>
</feature>
<feature type="strand" evidence="4">
    <location>
        <begin position="96"/>
        <end position="102"/>
    </location>
</feature>
<feature type="turn" evidence="4">
    <location>
        <begin position="105"/>
        <end position="107"/>
    </location>
</feature>
<feature type="strand" evidence="4">
    <location>
        <begin position="110"/>
        <end position="112"/>
    </location>
</feature>
<feature type="helix" evidence="4">
    <location>
        <begin position="116"/>
        <end position="118"/>
    </location>
</feature>
<feature type="strand" evidence="4">
    <location>
        <begin position="127"/>
        <end position="130"/>
    </location>
</feature>
<feature type="helix" evidence="4">
    <location>
        <begin position="134"/>
        <end position="139"/>
    </location>
</feature>
<proteinExistence type="evidence at protein level"/>
<sequence>MAERTHFMELALVEARSAGERDEVPIGAVLVLDGRVIARSGNRTRELNDVTAHAEIAVIRMACEALGQERLPGADLYVTLEPCTMCAAAISFARIRRLYYGAQDPKGGAVESGVRFFSQPTCHHAPDVYSGLAESESAEILRQFFREKRLDD</sequence>
<reference key="1">
    <citation type="journal article" date="2001" name="Science">
        <title>The genome of the natural genetic engineer Agrobacterium tumefaciens C58.</title>
        <authorList>
            <person name="Wood D.W."/>
            <person name="Setubal J.C."/>
            <person name="Kaul R."/>
            <person name="Monks D.E."/>
            <person name="Kitajima J.P."/>
            <person name="Okura V.K."/>
            <person name="Zhou Y."/>
            <person name="Chen L."/>
            <person name="Wood G.E."/>
            <person name="Almeida N.F. Jr."/>
            <person name="Woo L."/>
            <person name="Chen Y."/>
            <person name="Paulsen I.T."/>
            <person name="Eisen J.A."/>
            <person name="Karp P.D."/>
            <person name="Bovee D. Sr."/>
            <person name="Chapman P."/>
            <person name="Clendenning J."/>
            <person name="Deatherage G."/>
            <person name="Gillet W."/>
            <person name="Grant C."/>
            <person name="Kutyavin T."/>
            <person name="Levy R."/>
            <person name="Li M.-J."/>
            <person name="McClelland E."/>
            <person name="Palmieri A."/>
            <person name="Raymond C."/>
            <person name="Rouse G."/>
            <person name="Saenphimmachak C."/>
            <person name="Wu Z."/>
            <person name="Romero P."/>
            <person name="Gordon D."/>
            <person name="Zhang S."/>
            <person name="Yoo H."/>
            <person name="Tao Y."/>
            <person name="Biddle P."/>
            <person name="Jung M."/>
            <person name="Krespan W."/>
            <person name="Perry M."/>
            <person name="Gordon-Kamm B."/>
            <person name="Liao L."/>
            <person name="Kim S."/>
            <person name="Hendrick C."/>
            <person name="Zhao Z.-Y."/>
            <person name="Dolan M."/>
            <person name="Chumley F."/>
            <person name="Tingey S.V."/>
            <person name="Tomb J.-F."/>
            <person name="Gordon M.P."/>
            <person name="Olson M.V."/>
            <person name="Nester E.W."/>
        </authorList>
    </citation>
    <scope>NUCLEOTIDE SEQUENCE [LARGE SCALE GENOMIC DNA]</scope>
    <source>
        <strain>C58 / ATCC 33970</strain>
    </source>
</reference>
<reference key="2">
    <citation type="journal article" date="2001" name="Science">
        <title>Genome sequence of the plant pathogen and biotechnology agent Agrobacterium tumefaciens C58.</title>
        <authorList>
            <person name="Goodner B."/>
            <person name="Hinkle G."/>
            <person name="Gattung S."/>
            <person name="Miller N."/>
            <person name="Blanchard M."/>
            <person name="Qurollo B."/>
            <person name="Goldman B.S."/>
            <person name="Cao Y."/>
            <person name="Askenazi M."/>
            <person name="Halling C."/>
            <person name="Mullin L."/>
            <person name="Houmiel K."/>
            <person name="Gordon J."/>
            <person name="Vaudin M."/>
            <person name="Iartchouk O."/>
            <person name="Epp A."/>
            <person name="Liu F."/>
            <person name="Wollam C."/>
            <person name="Allinger M."/>
            <person name="Doughty D."/>
            <person name="Scott C."/>
            <person name="Lappas C."/>
            <person name="Markelz B."/>
            <person name="Flanagan C."/>
            <person name="Crowell C."/>
            <person name="Gurson J."/>
            <person name="Lomo C."/>
            <person name="Sear C."/>
            <person name="Strub G."/>
            <person name="Cielo C."/>
            <person name="Slater S."/>
        </authorList>
    </citation>
    <scope>NUCLEOTIDE SEQUENCE [LARGE SCALE GENOMIC DNA]</scope>
    <source>
        <strain>C58 / ATCC 33970</strain>
    </source>
</reference>
<reference key="3">
    <citation type="journal article" date="2005" name="Biochemistry">
        <title>Biochemical and structural studies of A-to-I editing by tRNA:A34 deaminases at the wobble position of transfer RNA.</title>
        <authorList>
            <person name="Elias Y."/>
            <person name="Huang R.H."/>
        </authorList>
    </citation>
    <scope>X-RAY CRYSTALLOGRAPHY (1.60 ANGSTROMS) OF 1-144 IN COMPLEX WITH ZINC</scope>
    <scope>FUNCTION</scope>
    <scope>CATALYTIC ACTIVITY</scope>
    <scope>COFACTOR</scope>
    <scope>SUBUNIT</scope>
    <scope>ACTIVE SITE</scope>
    <scope>MUTAGENESIS OF GLU-55; ARG-94; PHE-144; PHE-145 AND ARG-149</scope>
</reference>
<name>TADA_AGRFC</name>
<evidence type="ECO:0000255" key="1">
    <source>
        <dbReference type="HAMAP-Rule" id="MF_00972"/>
    </source>
</evidence>
<evidence type="ECO:0000255" key="2">
    <source>
        <dbReference type="PROSITE-ProRule" id="PRU01083"/>
    </source>
</evidence>
<evidence type="ECO:0000269" key="3">
    <source>
    </source>
</evidence>
<evidence type="ECO:0007829" key="4">
    <source>
        <dbReference type="PDB" id="2A8N"/>
    </source>
</evidence>
<comment type="function">
    <text evidence="1 3">Catalyzes the deamination of adenosine to inosine at the wobble position 34 of tRNA(Arg2).</text>
</comment>
<comment type="catalytic activity">
    <reaction evidence="1 3">
        <text>adenosine(34) in tRNA + H2O + H(+) = inosine(34) in tRNA + NH4(+)</text>
        <dbReference type="Rhea" id="RHEA:43168"/>
        <dbReference type="Rhea" id="RHEA-COMP:10373"/>
        <dbReference type="Rhea" id="RHEA-COMP:10374"/>
        <dbReference type="ChEBI" id="CHEBI:15377"/>
        <dbReference type="ChEBI" id="CHEBI:15378"/>
        <dbReference type="ChEBI" id="CHEBI:28938"/>
        <dbReference type="ChEBI" id="CHEBI:74411"/>
        <dbReference type="ChEBI" id="CHEBI:82852"/>
        <dbReference type="EC" id="3.5.4.33"/>
    </reaction>
</comment>
<comment type="cofactor">
    <cofactor evidence="1 3">
        <name>Zn(2+)</name>
        <dbReference type="ChEBI" id="CHEBI:29105"/>
    </cofactor>
    <text evidence="1 3">Binds 1 zinc ion per subunit.</text>
</comment>
<comment type="subunit">
    <text evidence="1 3">Homodimer.</text>
</comment>
<comment type="similarity">
    <text evidence="1">Belongs to the cytidine and deoxycytidylate deaminase family.</text>
</comment>
<dbReference type="EC" id="3.5.4.33" evidence="1"/>
<dbReference type="EMBL" id="AE007869">
    <property type="protein sequence ID" value="AAK86497.1"/>
    <property type="molecule type" value="Genomic_DNA"/>
</dbReference>
<dbReference type="PIR" id="AB2661">
    <property type="entry name" value="AB2661"/>
</dbReference>
<dbReference type="PIR" id="H97442">
    <property type="entry name" value="H97442"/>
</dbReference>
<dbReference type="RefSeq" id="NP_353712.1">
    <property type="nucleotide sequence ID" value="NC_003062.2"/>
</dbReference>
<dbReference type="RefSeq" id="WP_010971070.1">
    <property type="nucleotide sequence ID" value="NC_003062.2"/>
</dbReference>
<dbReference type="PDB" id="2A8N">
    <property type="method" value="X-ray"/>
    <property type="resolution" value="1.60 A"/>
    <property type="chains" value="A/B=1-144"/>
</dbReference>
<dbReference type="PDBsum" id="2A8N"/>
<dbReference type="SMR" id="A9CK16"/>
<dbReference type="STRING" id="176299.Atu0688"/>
<dbReference type="EnsemblBacteria" id="AAK86497">
    <property type="protein sequence ID" value="AAK86497"/>
    <property type="gene ID" value="Atu0688"/>
</dbReference>
<dbReference type="GeneID" id="1132726"/>
<dbReference type="KEGG" id="atu:Atu0688"/>
<dbReference type="PATRIC" id="fig|176299.10.peg.684"/>
<dbReference type="eggNOG" id="COG0590">
    <property type="taxonomic scope" value="Bacteria"/>
</dbReference>
<dbReference type="HOGENOM" id="CLU_025810_3_2_5"/>
<dbReference type="OrthoDB" id="9802676at2"/>
<dbReference type="PhylomeDB" id="A9CK16"/>
<dbReference type="BioCyc" id="AGRO:ATU0688-MONOMER"/>
<dbReference type="BRENDA" id="3.5.4.33">
    <property type="organism ID" value="200"/>
</dbReference>
<dbReference type="EvolutionaryTrace" id="A9CK16"/>
<dbReference type="Proteomes" id="UP000000813">
    <property type="component" value="Chromosome circular"/>
</dbReference>
<dbReference type="GO" id="GO:0052717">
    <property type="term" value="F:tRNA-specific adenosine-34 deaminase activity"/>
    <property type="evidence" value="ECO:0007669"/>
    <property type="project" value="UniProtKB-UniRule"/>
</dbReference>
<dbReference type="GO" id="GO:0008270">
    <property type="term" value="F:zinc ion binding"/>
    <property type="evidence" value="ECO:0007669"/>
    <property type="project" value="UniProtKB-UniRule"/>
</dbReference>
<dbReference type="GO" id="GO:0002100">
    <property type="term" value="P:tRNA wobble adenosine to inosine editing"/>
    <property type="evidence" value="ECO:0007669"/>
    <property type="project" value="UniProtKB-UniRule"/>
</dbReference>
<dbReference type="CDD" id="cd01285">
    <property type="entry name" value="nucleoside_deaminase"/>
    <property type="match status" value="1"/>
</dbReference>
<dbReference type="Gene3D" id="3.40.140.10">
    <property type="entry name" value="Cytidine Deaminase, domain 2"/>
    <property type="match status" value="1"/>
</dbReference>
<dbReference type="HAMAP" id="MF_00972">
    <property type="entry name" value="tRNA_aden_deaminase"/>
    <property type="match status" value="1"/>
</dbReference>
<dbReference type="InterPro" id="IPR016192">
    <property type="entry name" value="APOBEC/CMP_deaminase_Zn-bd"/>
</dbReference>
<dbReference type="InterPro" id="IPR002125">
    <property type="entry name" value="CMP_dCMP_dom"/>
</dbReference>
<dbReference type="InterPro" id="IPR016193">
    <property type="entry name" value="Cytidine_deaminase-like"/>
</dbReference>
<dbReference type="InterPro" id="IPR028883">
    <property type="entry name" value="tRNA_aden_deaminase"/>
</dbReference>
<dbReference type="PANTHER" id="PTHR11079">
    <property type="entry name" value="CYTOSINE DEAMINASE FAMILY MEMBER"/>
    <property type="match status" value="1"/>
</dbReference>
<dbReference type="PANTHER" id="PTHR11079:SF202">
    <property type="entry name" value="TRNA-SPECIFIC ADENOSINE DEAMINASE"/>
    <property type="match status" value="1"/>
</dbReference>
<dbReference type="Pfam" id="PF14437">
    <property type="entry name" value="MafB19-deam"/>
    <property type="match status" value="1"/>
</dbReference>
<dbReference type="SUPFAM" id="SSF53927">
    <property type="entry name" value="Cytidine deaminase-like"/>
    <property type="match status" value="1"/>
</dbReference>
<dbReference type="PROSITE" id="PS00903">
    <property type="entry name" value="CYT_DCMP_DEAMINASES_1"/>
    <property type="match status" value="1"/>
</dbReference>
<dbReference type="PROSITE" id="PS51747">
    <property type="entry name" value="CYT_DCMP_DEAMINASES_2"/>
    <property type="match status" value="1"/>
</dbReference>
<protein>
    <recommendedName>
        <fullName evidence="1">tRNA-specific adenosine deaminase</fullName>
        <ecNumber evidence="1">3.5.4.33</ecNumber>
    </recommendedName>
</protein>
<keyword id="KW-0002">3D-structure</keyword>
<keyword id="KW-0378">Hydrolase</keyword>
<keyword id="KW-0479">Metal-binding</keyword>
<keyword id="KW-1185">Reference proteome</keyword>
<keyword id="KW-0819">tRNA processing</keyword>
<keyword id="KW-0862">Zinc</keyword>
<organism>
    <name type="scientific">Agrobacterium fabrum (strain C58 / ATCC 33970)</name>
    <name type="common">Agrobacterium tumefaciens (strain C58)</name>
    <dbReference type="NCBI Taxonomy" id="176299"/>
    <lineage>
        <taxon>Bacteria</taxon>
        <taxon>Pseudomonadati</taxon>
        <taxon>Pseudomonadota</taxon>
        <taxon>Alphaproteobacteria</taxon>
        <taxon>Hyphomicrobiales</taxon>
        <taxon>Rhizobiaceae</taxon>
        <taxon>Rhizobium/Agrobacterium group</taxon>
        <taxon>Agrobacterium</taxon>
        <taxon>Agrobacterium tumefaciens complex</taxon>
    </lineage>
</organism>
<accession>A9CK16</accession>
<gene>
    <name evidence="1" type="primary">tadA</name>
    <name type="ordered locus">Atu0688</name>
</gene>